<name>HIR3P_HIRME</name>
<feature type="chain" id="PRO_0000195648" description="Hirudin-3A'">
    <location>
        <begin position="1"/>
        <end position="65"/>
    </location>
</feature>
<feature type="region of interest" description="Interaction with thrombin active site" evidence="1">
    <location>
        <begin position="1"/>
        <end position="3"/>
    </location>
</feature>
<feature type="region of interest" description="Disordered" evidence="2">
    <location>
        <begin position="32"/>
        <end position="65"/>
    </location>
</feature>
<feature type="region of interest" description="Interaction with fibrinogen-binding exosite of thrombin" evidence="1">
    <location>
        <begin position="55"/>
        <end position="65"/>
    </location>
</feature>
<feature type="compositionally biased region" description="Acidic residues" evidence="2">
    <location>
        <begin position="55"/>
        <end position="65"/>
    </location>
</feature>
<feature type="modified residue" description="Sulfotyrosine" evidence="1">
    <location>
        <position position="63"/>
    </location>
</feature>
<feature type="glycosylation site" description="O-linked (GalNAc...) threonine" evidence="1">
    <location>
        <position position="45"/>
    </location>
</feature>
<feature type="disulfide bond" evidence="1">
    <location>
        <begin position="6"/>
        <end position="14"/>
    </location>
</feature>
<feature type="disulfide bond" evidence="1">
    <location>
        <begin position="16"/>
        <end position="28"/>
    </location>
</feature>
<feature type="disulfide bond" evidence="1">
    <location>
        <begin position="22"/>
        <end position="39"/>
    </location>
</feature>
<feature type="helix" evidence="4">
    <location>
        <begin position="61"/>
        <end position="63"/>
    </location>
</feature>
<proteinExistence type="evidence at protein level"/>
<sequence length="65" mass="6973">VVYTDCTESGEDLCLCEGSNVCGEGNKCILGSDGEKNECVTGEGTPKPQSHNDGDFEEIPEEYLQ</sequence>
<protein>
    <recommendedName>
        <fullName>Hirudin-3A'</fullName>
    </recommendedName>
    <alternativeName>
        <fullName>Hirudin IIIA'</fullName>
    </alternativeName>
</protein>
<dbReference type="PIR" id="S78520">
    <property type="entry name" value="S78520"/>
</dbReference>
<dbReference type="PDB" id="1DWB">
    <property type="method" value="X-ray"/>
    <property type="resolution" value="3.16 A"/>
    <property type="chains" value="I=55-65"/>
</dbReference>
<dbReference type="PDB" id="1DWC">
    <property type="method" value="X-ray"/>
    <property type="resolution" value="3.00 A"/>
    <property type="chains" value="I=55-65"/>
</dbReference>
<dbReference type="PDB" id="1DWD">
    <property type="method" value="X-ray"/>
    <property type="resolution" value="3.00 A"/>
    <property type="chains" value="I=55-65"/>
</dbReference>
<dbReference type="PDB" id="1DWE">
    <property type="method" value="X-ray"/>
    <property type="resolution" value="3.00 A"/>
    <property type="chains" value="I=55-65"/>
</dbReference>
<dbReference type="PDB" id="2CF8">
    <property type="method" value="X-ray"/>
    <property type="resolution" value="1.30 A"/>
    <property type="chains" value="I=56-65"/>
</dbReference>
<dbReference type="PDB" id="2CF9">
    <property type="method" value="X-ray"/>
    <property type="resolution" value="1.79 A"/>
    <property type="chains" value="I=56-65"/>
</dbReference>
<dbReference type="PDB" id="4AYV">
    <property type="method" value="X-ray"/>
    <property type="resolution" value="2.80 A"/>
    <property type="chains" value="D=55-65"/>
</dbReference>
<dbReference type="PDB" id="4AYY">
    <property type="method" value="X-ray"/>
    <property type="resolution" value="2.60 A"/>
    <property type="chains" value="D=55-65"/>
</dbReference>
<dbReference type="PDB" id="4AZ2">
    <property type="method" value="X-ray"/>
    <property type="resolution" value="2.60 A"/>
    <property type="chains" value="D=55-65"/>
</dbReference>
<dbReference type="PDBsum" id="1DWB"/>
<dbReference type="PDBsum" id="1DWC"/>
<dbReference type="PDBsum" id="1DWD"/>
<dbReference type="PDBsum" id="1DWE"/>
<dbReference type="PDBsum" id="2CF8"/>
<dbReference type="PDBsum" id="2CF9"/>
<dbReference type="PDBsum" id="4AYV"/>
<dbReference type="PDBsum" id="4AYY"/>
<dbReference type="PDBsum" id="4AZ2"/>
<dbReference type="SMR" id="P28508"/>
<dbReference type="Allergome" id="9843">
    <property type="allergen name" value="Hir me Hirudin"/>
</dbReference>
<dbReference type="MEROPS" id="I14.001"/>
<dbReference type="EvolutionaryTrace" id="P28508"/>
<dbReference type="GO" id="GO:0005576">
    <property type="term" value="C:extracellular region"/>
    <property type="evidence" value="ECO:0007669"/>
    <property type="project" value="UniProtKB-SubCell"/>
</dbReference>
<dbReference type="GO" id="GO:0004867">
    <property type="term" value="F:serine-type endopeptidase inhibitor activity"/>
    <property type="evidence" value="ECO:0007669"/>
    <property type="project" value="UniProtKB-KW"/>
</dbReference>
<dbReference type="FunFam" id="2.70.10.10:FF:000001">
    <property type="entry name" value="Hirudin variant-1"/>
    <property type="match status" value="1"/>
</dbReference>
<dbReference type="Gene3D" id="2.70.10.10">
    <property type="entry name" value="Thrombin Inhibitor (Hirudin), subunit I"/>
    <property type="match status" value="1"/>
</dbReference>
<dbReference type="InterPro" id="IPR024793">
    <property type="entry name" value="Hirudin"/>
</dbReference>
<dbReference type="InterPro" id="IPR011061">
    <property type="entry name" value="Hirudin/antistatin"/>
</dbReference>
<dbReference type="InterPro" id="IPR000429">
    <property type="entry name" value="Prot_inh_hirudin"/>
</dbReference>
<dbReference type="Pfam" id="PF00713">
    <property type="entry name" value="Hirudin"/>
    <property type="match status" value="1"/>
</dbReference>
<dbReference type="PIRSF" id="PIRSF001640">
    <property type="entry name" value="Hirudin"/>
    <property type="match status" value="1"/>
</dbReference>
<dbReference type="PRINTS" id="PR00777">
    <property type="entry name" value="HIRUDIN"/>
</dbReference>
<dbReference type="SUPFAM" id="SSF57262">
    <property type="entry name" value="Leech antihemostatic proteins"/>
    <property type="match status" value="1"/>
</dbReference>
<evidence type="ECO:0000250" key="1"/>
<evidence type="ECO:0000256" key="2">
    <source>
        <dbReference type="SAM" id="MobiDB-lite"/>
    </source>
</evidence>
<evidence type="ECO:0000305" key="3"/>
<evidence type="ECO:0007829" key="4">
    <source>
        <dbReference type="PDB" id="4AYY"/>
    </source>
</evidence>
<keyword id="KW-0002">3D-structure</keyword>
<keyword id="KW-0903">Direct protein sequencing</keyword>
<keyword id="KW-1015">Disulfide bond</keyword>
<keyword id="KW-0325">Glycoprotein</keyword>
<keyword id="KW-0646">Protease inhibitor</keyword>
<keyword id="KW-0964">Secreted</keyword>
<keyword id="KW-0722">Serine protease inhibitor</keyword>
<keyword id="KW-0765">Sulfation</keyword>
<reference key="1">
    <citation type="journal article" date="1989" name="FEBS Lett.">
        <title>Primary structures of new 'iso-hirudins'.</title>
        <authorList>
            <person name="Scharf M."/>
            <person name="Engels J."/>
            <person name="Tripier D."/>
        </authorList>
    </citation>
    <scope>PROTEIN SEQUENCE</scope>
</reference>
<comment type="function">
    <text>Hirudin is a potent thrombin-specific protease inhibitor. It forms a stable non-covalent complex with alpha-thrombin, thereby abolishing its ability to cleave fibrinogen.</text>
</comment>
<comment type="subcellular location">
    <subcellularLocation>
        <location>Secreted</location>
    </subcellularLocation>
</comment>
<comment type="similarity">
    <text evidence="3">Belongs to the protease inhibitor I14 (hirudin) family.</text>
</comment>
<accession>P28508</accession>
<organism>
    <name type="scientific">Hirudo medicinalis</name>
    <name type="common">Medicinal leech</name>
    <dbReference type="NCBI Taxonomy" id="6421"/>
    <lineage>
        <taxon>Eukaryota</taxon>
        <taxon>Metazoa</taxon>
        <taxon>Spiralia</taxon>
        <taxon>Lophotrochozoa</taxon>
        <taxon>Annelida</taxon>
        <taxon>Clitellata</taxon>
        <taxon>Hirudinea</taxon>
        <taxon>Hirudinida</taxon>
        <taxon>Hirudiniformes</taxon>
        <taxon>Hirudinidae</taxon>
        <taxon>Hirudo</taxon>
    </lineage>
</organism>